<organism>
    <name type="scientific">Rhizobium meliloti (strain 1021)</name>
    <name type="common">Ensifer meliloti</name>
    <name type="synonym">Sinorhizobium meliloti</name>
    <dbReference type="NCBI Taxonomy" id="266834"/>
    <lineage>
        <taxon>Bacteria</taxon>
        <taxon>Pseudomonadati</taxon>
        <taxon>Pseudomonadota</taxon>
        <taxon>Alphaproteobacteria</taxon>
        <taxon>Hyphomicrobiales</taxon>
        <taxon>Rhizobiaceae</taxon>
        <taxon>Sinorhizobium/Ensifer group</taxon>
        <taxon>Sinorhizobium</taxon>
    </lineage>
</organism>
<sequence length="488" mass="53037">MTEPTQLWGGRFKSGPSEALANLSRAPRSYFRLYKEDIAGSRAHASELKRAGVLDESEFSAIRAALEGIEADVGAGREEPIAADEDLHTFLERLLMARLGTLGGKLRAGRSRNDQTANNTRLYLRRMARELSQGVIAIEEALTEQASRHTETVMPGFTHLQPAQPVVLGHHLMAHAQSLLRDLQRFADWDRRFDRSPLGAAALAGSGIARRPDLSAIDLGYSAACENSIDAVAARDHVAEFLFICSLVAVDLSRLAEEICLWSSKQFSWVRLHDSYSTGSSIMPQKKNPDVAELTRGMSGTLIGNIAGFLATMKAMPLAYNRDLAEDKRSLFETIDVLELVLPAFAGMVGTLEFDVEKLREEAPKGFTLATEVADWLVGRDVPFAEAHEITGAVVRFCEERGHDLAGLTAEDLPGIDPRLHPEMLAALVLEKALASRNGYGATAPEKVREQIARFETALAECCAFAGGPIGGGAFAGAKDGAEEARRR</sequence>
<reference key="1">
    <citation type="journal article" date="2001" name="Proc. Natl. Acad. Sci. U.S.A.">
        <title>The complete sequence of the 1,683-kb pSymB megaplasmid from the N2-fixing endosymbiont Sinorhizobium meliloti.</title>
        <authorList>
            <person name="Finan T.M."/>
            <person name="Weidner S."/>
            <person name="Wong K."/>
            <person name="Buhrmester J."/>
            <person name="Chain P."/>
            <person name="Vorhoelter F.J."/>
            <person name="Hernandez-Lucas I."/>
            <person name="Becker A."/>
            <person name="Cowie A."/>
            <person name="Gouzy J."/>
            <person name="Golding B."/>
            <person name="Puehler A."/>
        </authorList>
    </citation>
    <scope>NUCLEOTIDE SEQUENCE [LARGE SCALE GENOMIC DNA]</scope>
    <source>
        <strain>1021</strain>
    </source>
</reference>
<reference key="2">
    <citation type="journal article" date="2001" name="Science">
        <title>The composite genome of the legume symbiont Sinorhizobium meliloti.</title>
        <authorList>
            <person name="Galibert F."/>
            <person name="Finan T.M."/>
            <person name="Long S.R."/>
            <person name="Puehler A."/>
            <person name="Abola P."/>
            <person name="Ampe F."/>
            <person name="Barloy-Hubler F."/>
            <person name="Barnett M.J."/>
            <person name="Becker A."/>
            <person name="Boistard P."/>
            <person name="Bothe G."/>
            <person name="Boutry M."/>
            <person name="Bowser L."/>
            <person name="Buhrmester J."/>
            <person name="Cadieu E."/>
            <person name="Capela D."/>
            <person name="Chain P."/>
            <person name="Cowie A."/>
            <person name="Davis R.W."/>
            <person name="Dreano S."/>
            <person name="Federspiel N.A."/>
            <person name="Fisher R.F."/>
            <person name="Gloux S."/>
            <person name="Godrie T."/>
            <person name="Goffeau A."/>
            <person name="Golding B."/>
            <person name="Gouzy J."/>
            <person name="Gurjal M."/>
            <person name="Hernandez-Lucas I."/>
            <person name="Hong A."/>
            <person name="Huizar L."/>
            <person name="Hyman R.W."/>
            <person name="Jones T."/>
            <person name="Kahn D."/>
            <person name="Kahn M.L."/>
            <person name="Kalman S."/>
            <person name="Keating D.H."/>
            <person name="Kiss E."/>
            <person name="Komp C."/>
            <person name="Lelaure V."/>
            <person name="Masuy D."/>
            <person name="Palm C."/>
            <person name="Peck M.C."/>
            <person name="Pohl T.M."/>
            <person name="Portetelle D."/>
            <person name="Purnelle B."/>
            <person name="Ramsperger U."/>
            <person name="Surzycki R."/>
            <person name="Thebault P."/>
            <person name="Vandenbol M."/>
            <person name="Vorhoelter F.J."/>
            <person name="Weidner S."/>
            <person name="Wells D.H."/>
            <person name="Wong K."/>
            <person name="Yeh K.-C."/>
            <person name="Batut J."/>
        </authorList>
    </citation>
    <scope>NUCLEOTIDE SEQUENCE [LARGE SCALE GENOMIC DNA]</scope>
    <source>
        <strain>1021</strain>
    </source>
</reference>
<protein>
    <recommendedName>
        <fullName evidence="1">Argininosuccinate lyase 2</fullName>
        <shortName evidence="1">ASAL 2</shortName>
        <ecNumber evidence="1">4.3.2.1</ecNumber>
    </recommendedName>
    <alternativeName>
        <fullName evidence="1">Arginosuccinase 2</fullName>
    </alternativeName>
</protein>
<geneLocation type="plasmid">
    <name>pSymB</name>
    <name>megaplasmid 2</name>
</geneLocation>
<keyword id="KW-0028">Amino-acid biosynthesis</keyword>
<keyword id="KW-0055">Arginine biosynthesis</keyword>
<keyword id="KW-0963">Cytoplasm</keyword>
<keyword id="KW-0456">Lyase</keyword>
<keyword id="KW-0614">Plasmid</keyword>
<keyword id="KW-1185">Reference proteome</keyword>
<proteinExistence type="inferred from homology"/>
<name>ARLY2_RHIME</name>
<accession>Q92VM6</accession>
<evidence type="ECO:0000255" key="1">
    <source>
        <dbReference type="HAMAP-Rule" id="MF_00006"/>
    </source>
</evidence>
<dbReference type="EC" id="4.3.2.1" evidence="1"/>
<dbReference type="EMBL" id="AL591985">
    <property type="protein sequence ID" value="CAC49073.1"/>
    <property type="molecule type" value="Genomic_DNA"/>
</dbReference>
<dbReference type="PIR" id="A95926">
    <property type="entry name" value="A95926"/>
</dbReference>
<dbReference type="RefSeq" id="NP_437213.1">
    <property type="nucleotide sequence ID" value="NC_003078.1"/>
</dbReference>
<dbReference type="SMR" id="Q92VM6"/>
<dbReference type="EnsemblBacteria" id="CAC49073">
    <property type="protein sequence ID" value="CAC49073"/>
    <property type="gene ID" value="SM_b21094"/>
</dbReference>
<dbReference type="KEGG" id="sme:SM_b21094"/>
<dbReference type="PATRIC" id="fig|266834.11.peg.5601"/>
<dbReference type="eggNOG" id="COG0165">
    <property type="taxonomic scope" value="Bacteria"/>
</dbReference>
<dbReference type="HOGENOM" id="CLU_027272_2_2_5"/>
<dbReference type="OrthoDB" id="9769623at2"/>
<dbReference type="UniPathway" id="UPA00068">
    <property type="reaction ID" value="UER00114"/>
</dbReference>
<dbReference type="Proteomes" id="UP000001976">
    <property type="component" value="Plasmid pSymB"/>
</dbReference>
<dbReference type="GO" id="GO:0005829">
    <property type="term" value="C:cytosol"/>
    <property type="evidence" value="ECO:0007669"/>
    <property type="project" value="TreeGrafter"/>
</dbReference>
<dbReference type="GO" id="GO:0004056">
    <property type="term" value="F:argininosuccinate lyase activity"/>
    <property type="evidence" value="ECO:0007669"/>
    <property type="project" value="UniProtKB-UniRule"/>
</dbReference>
<dbReference type="GO" id="GO:0042450">
    <property type="term" value="P:arginine biosynthetic process via ornithine"/>
    <property type="evidence" value="ECO:0007669"/>
    <property type="project" value="InterPro"/>
</dbReference>
<dbReference type="GO" id="GO:0006526">
    <property type="term" value="P:L-arginine biosynthetic process"/>
    <property type="evidence" value="ECO:0007669"/>
    <property type="project" value="UniProtKB-UniRule"/>
</dbReference>
<dbReference type="CDD" id="cd01359">
    <property type="entry name" value="Argininosuccinate_lyase"/>
    <property type="match status" value="1"/>
</dbReference>
<dbReference type="FunFam" id="1.20.200.10:FF:000015">
    <property type="entry name" value="argininosuccinate lyase isoform X2"/>
    <property type="match status" value="1"/>
</dbReference>
<dbReference type="Gene3D" id="1.10.40.30">
    <property type="entry name" value="Fumarase/aspartase (C-terminal domain)"/>
    <property type="match status" value="1"/>
</dbReference>
<dbReference type="Gene3D" id="1.20.200.10">
    <property type="entry name" value="Fumarase/aspartase (Central domain)"/>
    <property type="match status" value="1"/>
</dbReference>
<dbReference type="Gene3D" id="1.10.275.10">
    <property type="entry name" value="Fumarase/aspartase (N-terminal domain)"/>
    <property type="match status" value="1"/>
</dbReference>
<dbReference type="HAMAP" id="MF_00006">
    <property type="entry name" value="Arg_succ_lyase"/>
    <property type="match status" value="1"/>
</dbReference>
<dbReference type="InterPro" id="IPR029419">
    <property type="entry name" value="Arg_succ_lyase_C"/>
</dbReference>
<dbReference type="InterPro" id="IPR009049">
    <property type="entry name" value="Argininosuccinate_lyase"/>
</dbReference>
<dbReference type="InterPro" id="IPR024083">
    <property type="entry name" value="Fumarase/histidase_N"/>
</dbReference>
<dbReference type="InterPro" id="IPR020557">
    <property type="entry name" value="Fumarate_lyase_CS"/>
</dbReference>
<dbReference type="InterPro" id="IPR000362">
    <property type="entry name" value="Fumarate_lyase_fam"/>
</dbReference>
<dbReference type="InterPro" id="IPR022761">
    <property type="entry name" value="Fumarate_lyase_N"/>
</dbReference>
<dbReference type="InterPro" id="IPR008948">
    <property type="entry name" value="L-Aspartase-like"/>
</dbReference>
<dbReference type="NCBIfam" id="TIGR00838">
    <property type="entry name" value="argH"/>
    <property type="match status" value="1"/>
</dbReference>
<dbReference type="PANTHER" id="PTHR43814">
    <property type="entry name" value="ARGININOSUCCINATE LYASE"/>
    <property type="match status" value="1"/>
</dbReference>
<dbReference type="PANTHER" id="PTHR43814:SF1">
    <property type="entry name" value="ARGININOSUCCINATE LYASE"/>
    <property type="match status" value="1"/>
</dbReference>
<dbReference type="Pfam" id="PF14698">
    <property type="entry name" value="ASL_C2"/>
    <property type="match status" value="1"/>
</dbReference>
<dbReference type="Pfam" id="PF00206">
    <property type="entry name" value="Lyase_1"/>
    <property type="match status" value="1"/>
</dbReference>
<dbReference type="PRINTS" id="PR00145">
    <property type="entry name" value="ARGSUCLYASE"/>
</dbReference>
<dbReference type="PRINTS" id="PR00149">
    <property type="entry name" value="FUMRATELYASE"/>
</dbReference>
<dbReference type="SUPFAM" id="SSF48557">
    <property type="entry name" value="L-aspartase-like"/>
    <property type="match status" value="1"/>
</dbReference>
<dbReference type="PROSITE" id="PS00163">
    <property type="entry name" value="FUMARATE_LYASES"/>
    <property type="match status" value="1"/>
</dbReference>
<comment type="catalytic activity">
    <reaction evidence="1">
        <text>2-(N(omega)-L-arginino)succinate = fumarate + L-arginine</text>
        <dbReference type="Rhea" id="RHEA:24020"/>
        <dbReference type="ChEBI" id="CHEBI:29806"/>
        <dbReference type="ChEBI" id="CHEBI:32682"/>
        <dbReference type="ChEBI" id="CHEBI:57472"/>
        <dbReference type="EC" id="4.3.2.1"/>
    </reaction>
</comment>
<comment type="pathway">
    <text evidence="1">Amino-acid biosynthesis; L-arginine biosynthesis; L-arginine from L-ornithine and carbamoyl phosphate: step 3/3.</text>
</comment>
<comment type="subcellular location">
    <subcellularLocation>
        <location evidence="1">Cytoplasm</location>
    </subcellularLocation>
</comment>
<comment type="similarity">
    <text evidence="1">Belongs to the lyase 1 family. Argininosuccinate lyase subfamily.</text>
</comment>
<gene>
    <name evidence="1" type="primary">argH2</name>
    <name type="ordered locus">RB0673</name>
    <name type="ORF">SMb21094</name>
</gene>
<feature type="chain" id="PRO_0000137813" description="Argininosuccinate lyase 2">
    <location>
        <begin position="1"/>
        <end position="488"/>
    </location>
</feature>